<keyword id="KW-0227">DNA damage</keyword>
<keyword id="KW-0233">DNA recombination</keyword>
<keyword id="KW-0234">DNA repair</keyword>
<keyword id="KW-0539">Nucleus</keyword>
<keyword id="KW-1185">Reference proteome</keyword>
<comment type="function">
    <text evidence="1">Plays a role in a RAD51/RAD54-dependent homologous recombination repair (HRR) pathway to repair MMS-induced lesions during S-phase. Required for error-free repair of spontaneous and induced DNA lesions to protect the genome from mutation (By similarity).</text>
</comment>
<comment type="subcellular location">
    <subcellularLocation>
        <location evidence="1">Nucleus</location>
    </subcellularLocation>
</comment>
<comment type="similarity">
    <text evidence="3">Belongs to the SHU2 family.</text>
</comment>
<proteinExistence type="inferred from homology"/>
<feature type="chain" id="PRO_0000409734" description="Suppressor of hydroxyurea sensitivity protein 2">
    <location>
        <begin position="1"/>
        <end position="249"/>
    </location>
</feature>
<feature type="region of interest" description="Disordered" evidence="2">
    <location>
        <begin position="68"/>
        <end position="95"/>
    </location>
</feature>
<evidence type="ECO:0000250" key="1"/>
<evidence type="ECO:0000256" key="2">
    <source>
        <dbReference type="SAM" id="MobiDB-lite"/>
    </source>
</evidence>
<evidence type="ECO:0000305" key="3"/>
<dbReference type="EMBL" id="CU928180">
    <property type="protein sequence ID" value="CAR30337.1"/>
    <property type="molecule type" value="Genomic_DNA"/>
</dbReference>
<dbReference type="RefSeq" id="XP_002556199.1">
    <property type="nucleotide sequence ID" value="XM_002556153.1"/>
</dbReference>
<dbReference type="SMR" id="C5E2S6"/>
<dbReference type="FunCoup" id="C5E2S6">
    <property type="interactions" value="22"/>
</dbReference>
<dbReference type="STRING" id="559295.C5E2S6"/>
<dbReference type="GeneID" id="8294516"/>
<dbReference type="KEGG" id="lth:KLTH0H07348g"/>
<dbReference type="eggNOG" id="ENOG502S0XB">
    <property type="taxonomic scope" value="Eukaryota"/>
</dbReference>
<dbReference type="HOGENOM" id="CLU_1115918_0_0_1"/>
<dbReference type="InParanoid" id="C5E2S6"/>
<dbReference type="OMA" id="WLKLHLN"/>
<dbReference type="OrthoDB" id="4066852at2759"/>
<dbReference type="Proteomes" id="UP000002036">
    <property type="component" value="Chromosome H"/>
</dbReference>
<dbReference type="GO" id="GO:0005634">
    <property type="term" value="C:nucleus"/>
    <property type="evidence" value="ECO:0007669"/>
    <property type="project" value="UniProtKB-SubCell"/>
</dbReference>
<dbReference type="GO" id="GO:0006310">
    <property type="term" value="P:DNA recombination"/>
    <property type="evidence" value="ECO:0007669"/>
    <property type="project" value="UniProtKB-KW"/>
</dbReference>
<dbReference type="GO" id="GO:0006281">
    <property type="term" value="P:DNA repair"/>
    <property type="evidence" value="ECO:0007669"/>
    <property type="project" value="UniProtKB-KW"/>
</dbReference>
<gene>
    <name type="primary">SHU2</name>
    <name type="ordered locus">KLTH0H07348g</name>
</gene>
<protein>
    <recommendedName>
        <fullName>Suppressor of hydroxyurea sensitivity protein 2</fullName>
    </recommendedName>
</protein>
<accession>C5E2S6</accession>
<organism>
    <name type="scientific">Lachancea thermotolerans (strain ATCC 56472 / CBS 6340 / NRRL Y-8284)</name>
    <name type="common">Yeast</name>
    <name type="synonym">Kluyveromyces thermotolerans</name>
    <dbReference type="NCBI Taxonomy" id="559295"/>
    <lineage>
        <taxon>Eukaryota</taxon>
        <taxon>Fungi</taxon>
        <taxon>Dikarya</taxon>
        <taxon>Ascomycota</taxon>
        <taxon>Saccharomycotina</taxon>
        <taxon>Saccharomycetes</taxon>
        <taxon>Saccharomycetales</taxon>
        <taxon>Saccharomycetaceae</taxon>
        <taxon>Lachancea</taxon>
    </lineage>
</organism>
<sequence>MVDEHYIDYSQLLAQLLDKDGELNETTVSFLYHLFPSDFFVRAMSLIDSNNMFIYVFERDETSAALTTSVGTEPDEVETTTETLRTSPSPPVASEQELGNAVQSSALINTLYEKPQSVLHRLIVKQEGPQSPPVCVDLRHWFCSCDEYNTLFEERMLTDEEPSLYSKATTELRAGASITDSFASMPPKGASRRYFRHDIIMCPHLLAFAILLQTTPELLTYFTHKAATVYLITIQNLDEWLKLHLNVVI</sequence>
<reference key="1">
    <citation type="journal article" date="2009" name="Genome Res.">
        <title>Comparative genomics of protoploid Saccharomycetaceae.</title>
        <authorList>
            <consortium name="The Genolevures Consortium"/>
            <person name="Souciet J.-L."/>
            <person name="Dujon B."/>
            <person name="Gaillardin C."/>
            <person name="Johnston M."/>
            <person name="Baret P.V."/>
            <person name="Cliften P."/>
            <person name="Sherman D.J."/>
            <person name="Weissenbach J."/>
            <person name="Westhof E."/>
            <person name="Wincker P."/>
            <person name="Jubin C."/>
            <person name="Poulain J."/>
            <person name="Barbe V."/>
            <person name="Segurens B."/>
            <person name="Artiguenave F."/>
            <person name="Anthouard V."/>
            <person name="Vacherie B."/>
            <person name="Val M.-E."/>
            <person name="Fulton R.S."/>
            <person name="Minx P."/>
            <person name="Wilson R."/>
            <person name="Durrens P."/>
            <person name="Jean G."/>
            <person name="Marck C."/>
            <person name="Martin T."/>
            <person name="Nikolski M."/>
            <person name="Rolland T."/>
            <person name="Seret M.-L."/>
            <person name="Casaregola S."/>
            <person name="Despons L."/>
            <person name="Fairhead C."/>
            <person name="Fischer G."/>
            <person name="Lafontaine I."/>
            <person name="Leh V."/>
            <person name="Lemaire M."/>
            <person name="de Montigny J."/>
            <person name="Neuveglise C."/>
            <person name="Thierry A."/>
            <person name="Blanc-Lenfle I."/>
            <person name="Bleykasten C."/>
            <person name="Diffels J."/>
            <person name="Fritsch E."/>
            <person name="Frangeul L."/>
            <person name="Goeffon A."/>
            <person name="Jauniaux N."/>
            <person name="Kachouri-Lafond R."/>
            <person name="Payen C."/>
            <person name="Potier S."/>
            <person name="Pribylova L."/>
            <person name="Ozanne C."/>
            <person name="Richard G.-F."/>
            <person name="Sacerdot C."/>
            <person name="Straub M.-L."/>
            <person name="Talla E."/>
        </authorList>
    </citation>
    <scope>NUCLEOTIDE SEQUENCE [LARGE SCALE GENOMIC DNA]</scope>
    <source>
        <strain>ATCC 56472 / CBS 6340 / NRRL Y-8284</strain>
    </source>
</reference>
<name>SHU2_LACTC</name>